<accession>Q9XTD6</accession>
<accession>Q70MT0</accession>
<gene>
    <name type="primary">nas-12</name>
    <name type="ORF">C24F3.3</name>
</gene>
<name>NAS12_CAEEL</name>
<reference key="1">
    <citation type="journal article" date="1998" name="Science">
        <title>Genome sequence of the nematode C. elegans: a platform for investigating biology.</title>
        <authorList>
            <consortium name="The C. elegans sequencing consortium"/>
        </authorList>
    </citation>
    <scope>NUCLEOTIDE SEQUENCE [LARGE SCALE GENOMIC DNA]</scope>
    <source>
        <strain>Bristol N2</strain>
    </source>
</reference>
<reference key="2">
    <citation type="journal article" date="2003" name="Eur. J. Biochem.">
        <title>The astacin protein family in Caenorhabditis elegans.</title>
        <authorList>
            <person name="Moehrlen F."/>
            <person name="Hutter H."/>
            <person name="Zwilling R."/>
        </authorList>
    </citation>
    <scope>NUCLEOTIDE SEQUENCE [MRNA] OF 279-351</scope>
    <scope>NOMENCLATURE</scope>
    <source>
        <strain>Bristol N2</strain>
    </source>
</reference>
<reference key="3">
    <citation type="journal article" date="2010" name="BMC Dev. Biol.">
        <title>Characterization of the astacin family of metalloproteases in C. elegans.</title>
        <authorList>
            <person name="Park J.O."/>
            <person name="Pan J."/>
            <person name="Moehrlen F."/>
            <person name="Schupp M.O."/>
            <person name="Johnsen R."/>
            <person name="Baillie D.L."/>
            <person name="Zapf R."/>
            <person name="Moerman D.G."/>
            <person name="Hutter H."/>
        </authorList>
    </citation>
    <scope>TISSUE SPECIFICITY</scope>
</reference>
<comment type="function">
    <text evidence="2">Metalloprotease.</text>
</comment>
<comment type="cofactor">
    <cofactor evidence="5">
        <name>Zn(2+)</name>
        <dbReference type="ChEBI" id="CHEBI:29105"/>
    </cofactor>
    <text evidence="5">Binds 1 zinc ion per subunit.</text>
</comment>
<comment type="subcellular location">
    <subcellularLocation>
        <location evidence="7">Secreted</location>
    </subcellularLocation>
</comment>
<comment type="tissue specificity">
    <text evidence="6">Expressed in pharyngeal glands.</text>
</comment>
<organism>
    <name type="scientific">Caenorhabditis elegans</name>
    <dbReference type="NCBI Taxonomy" id="6239"/>
    <lineage>
        <taxon>Eukaryota</taxon>
        <taxon>Metazoa</taxon>
        <taxon>Ecdysozoa</taxon>
        <taxon>Nematoda</taxon>
        <taxon>Chromadorea</taxon>
        <taxon>Rhabditida</taxon>
        <taxon>Rhabditina</taxon>
        <taxon>Rhabditomorpha</taxon>
        <taxon>Rhabditoidea</taxon>
        <taxon>Rhabditidae</taxon>
        <taxon>Peloderinae</taxon>
        <taxon>Caenorhabditis</taxon>
    </lineage>
</organism>
<sequence length="384" mass="44082">MLYIPQFSIYFCLGYLLLFCKISNAVKQSWEINQELITEANKEHTVFGDMLLTPAQLIRYENSKDSDLSIRGVSIKGSSMNRWSNNIVPYVISPQYSPAQKQILVSSLRYFERVSCFKFVERTTQNDYLFIVPLDGCYSYVGKIGGRQTLSLAADCIADYIIWHEMMHAIGFEHEHQRPDRDSFIRVDYANVIPGQMINFDKLKTSHVEYPDIYDFKSIMHYDGYAFGRVDTARRVRLATMTPLKPGVTLEDNMKFTATDIEKLNRLGQCGARGGQYSNQGVVASTCQDVATAVSCEGNRRRGMCKNPFYKQMMIKSCQKTCRLCSYTRMIDEDDDLTPNTTVKSVKCEDKHPRCDIYSHNGFCTLPFYDDVRYQLCAKTCNLC</sequence>
<feature type="signal peptide" evidence="3">
    <location>
        <begin position="1"/>
        <end position="25"/>
    </location>
</feature>
<feature type="propeptide" id="PRO_0000442659" evidence="7">
    <location>
        <begin position="26"/>
        <end status="unknown"/>
    </location>
</feature>
<feature type="chain" id="PRO_0000028916" description="Zinc metalloproteinase nas-12">
    <location>
        <begin status="unknown"/>
        <end position="384"/>
    </location>
</feature>
<feature type="domain" description="Peptidase M12A" evidence="5">
    <location>
        <begin position="73"/>
        <end position="271"/>
    </location>
</feature>
<feature type="domain" description="ShKT 1" evidence="4">
    <location>
        <begin position="287"/>
        <end position="325"/>
    </location>
</feature>
<feature type="domain" description="ShKT 2" evidence="4">
    <location>
        <begin position="348"/>
        <end position="384"/>
    </location>
</feature>
<feature type="active site" evidence="5">
    <location>
        <position position="165"/>
    </location>
</feature>
<feature type="binding site" evidence="5">
    <location>
        <position position="164"/>
    </location>
    <ligand>
        <name>Zn(2+)</name>
        <dbReference type="ChEBI" id="CHEBI:29105"/>
        <note>catalytic</note>
    </ligand>
</feature>
<feature type="binding site" evidence="5">
    <location>
        <position position="168"/>
    </location>
    <ligand>
        <name>Zn(2+)</name>
        <dbReference type="ChEBI" id="CHEBI:29105"/>
        <note>catalytic</note>
    </ligand>
</feature>
<feature type="binding site" evidence="5">
    <location>
        <position position="174"/>
    </location>
    <ligand>
        <name>Zn(2+)</name>
        <dbReference type="ChEBI" id="CHEBI:29105"/>
        <note>catalytic</note>
    </ligand>
</feature>
<feature type="glycosylation site" description="N-linked (GlcNAc...) asparagine" evidence="3">
    <location>
        <position position="340"/>
    </location>
</feature>
<feature type="disulfide bond" evidence="5">
    <location>
        <begin position="116"/>
        <end position="270"/>
    </location>
</feature>
<feature type="disulfide bond" evidence="5">
    <location>
        <begin position="137"/>
        <end position="156"/>
    </location>
</feature>
<feature type="disulfide bond" evidence="4">
    <location>
        <begin position="287"/>
        <end position="325"/>
    </location>
</feature>
<feature type="disulfide bond" evidence="4">
    <location>
        <begin position="296"/>
        <end position="318"/>
    </location>
</feature>
<feature type="disulfide bond" evidence="4">
    <location>
        <begin position="305"/>
        <end position="322"/>
    </location>
</feature>
<feature type="disulfide bond" evidence="4">
    <location>
        <begin position="348"/>
        <end position="384"/>
    </location>
</feature>
<feature type="disulfide bond" evidence="4">
    <location>
        <begin position="355"/>
        <end position="377"/>
    </location>
</feature>
<feature type="disulfide bond" evidence="4">
    <location>
        <begin position="364"/>
        <end position="381"/>
    </location>
</feature>
<dbReference type="EC" id="3.4.24.-" evidence="1"/>
<dbReference type="EMBL" id="AL022716">
    <property type="protein sequence ID" value="CAA18774.2"/>
    <property type="molecule type" value="Genomic_DNA"/>
</dbReference>
<dbReference type="EMBL" id="Z81055">
    <property type="protein sequence ID" value="CAA18774.2"/>
    <property type="status" value="JOINED"/>
    <property type="molecule type" value="Genomic_DNA"/>
</dbReference>
<dbReference type="EMBL" id="AJ561205">
    <property type="protein sequence ID" value="CAE47483.1"/>
    <property type="molecule type" value="mRNA"/>
</dbReference>
<dbReference type="PIR" id="T19421">
    <property type="entry name" value="T19421"/>
</dbReference>
<dbReference type="RefSeq" id="NP_501871.2">
    <property type="nucleotide sequence ID" value="NM_069470.4"/>
</dbReference>
<dbReference type="SMR" id="Q9XTD6"/>
<dbReference type="STRING" id="6239.C24F3.3.1"/>
<dbReference type="MEROPS" id="M12.A20"/>
<dbReference type="GlyCosmos" id="Q9XTD6">
    <property type="glycosylation" value="1 site, No reported glycans"/>
</dbReference>
<dbReference type="PaxDb" id="6239-C24F3.3"/>
<dbReference type="EnsemblMetazoa" id="C24F3.3.1">
    <property type="protein sequence ID" value="C24F3.3.1"/>
    <property type="gene ID" value="WBGene00003531"/>
</dbReference>
<dbReference type="GeneID" id="182848"/>
<dbReference type="KEGG" id="cel:CELE_C24F3.3"/>
<dbReference type="UCSC" id="C24F3.3">
    <property type="organism name" value="c. elegans"/>
</dbReference>
<dbReference type="AGR" id="WB:WBGene00003531"/>
<dbReference type="CTD" id="182848"/>
<dbReference type="WormBase" id="C24F3.3">
    <property type="protein sequence ID" value="CE35408"/>
    <property type="gene ID" value="WBGene00003531"/>
    <property type="gene designation" value="nas-12"/>
</dbReference>
<dbReference type="eggNOG" id="KOG3714">
    <property type="taxonomic scope" value="Eukaryota"/>
</dbReference>
<dbReference type="GeneTree" id="ENSGT00970000196593"/>
<dbReference type="HOGENOM" id="CLU_017286_0_3_1"/>
<dbReference type="InParanoid" id="Q9XTD6"/>
<dbReference type="OMA" id="RWENNIV"/>
<dbReference type="OrthoDB" id="291007at2759"/>
<dbReference type="PhylomeDB" id="Q9XTD6"/>
<dbReference type="PRO" id="PR:Q9XTD6"/>
<dbReference type="Proteomes" id="UP000001940">
    <property type="component" value="Chromosome IV"/>
</dbReference>
<dbReference type="Bgee" id="WBGene00003531">
    <property type="expression patterns" value="Expressed in anatomical system and 4 other cell types or tissues"/>
</dbReference>
<dbReference type="GO" id="GO:0005576">
    <property type="term" value="C:extracellular region"/>
    <property type="evidence" value="ECO:0007669"/>
    <property type="project" value="UniProtKB-SubCell"/>
</dbReference>
<dbReference type="GO" id="GO:0004222">
    <property type="term" value="F:metalloendopeptidase activity"/>
    <property type="evidence" value="ECO:0000318"/>
    <property type="project" value="GO_Central"/>
</dbReference>
<dbReference type="GO" id="GO:0008270">
    <property type="term" value="F:zinc ion binding"/>
    <property type="evidence" value="ECO:0007669"/>
    <property type="project" value="InterPro"/>
</dbReference>
<dbReference type="GO" id="GO:0006508">
    <property type="term" value="P:proteolysis"/>
    <property type="evidence" value="ECO:0007669"/>
    <property type="project" value="UniProtKB-KW"/>
</dbReference>
<dbReference type="CDD" id="cd04280">
    <property type="entry name" value="ZnMc_astacin_like"/>
    <property type="match status" value="1"/>
</dbReference>
<dbReference type="Gene3D" id="1.10.10.1940">
    <property type="match status" value="2"/>
</dbReference>
<dbReference type="Gene3D" id="3.40.390.10">
    <property type="entry name" value="Collagenase (Catalytic Domain)"/>
    <property type="match status" value="1"/>
</dbReference>
<dbReference type="InterPro" id="IPR034035">
    <property type="entry name" value="Astacin-like_dom"/>
</dbReference>
<dbReference type="InterPro" id="IPR024079">
    <property type="entry name" value="MetalloPept_cat_dom_sf"/>
</dbReference>
<dbReference type="InterPro" id="IPR001506">
    <property type="entry name" value="Peptidase_M12A"/>
</dbReference>
<dbReference type="InterPro" id="IPR006026">
    <property type="entry name" value="Peptidase_Metallo"/>
</dbReference>
<dbReference type="InterPro" id="IPR003582">
    <property type="entry name" value="ShKT_dom"/>
</dbReference>
<dbReference type="PANTHER" id="PTHR10127">
    <property type="entry name" value="DISCOIDIN, CUB, EGF, LAMININ , AND ZINC METALLOPROTEASE DOMAIN CONTAINING"/>
    <property type="match status" value="1"/>
</dbReference>
<dbReference type="PANTHER" id="PTHR10127:SF852">
    <property type="entry name" value="ZINC METALLOPROTEINASE NAS-12"/>
    <property type="match status" value="1"/>
</dbReference>
<dbReference type="Pfam" id="PF01400">
    <property type="entry name" value="Astacin"/>
    <property type="match status" value="1"/>
</dbReference>
<dbReference type="Pfam" id="PF01549">
    <property type="entry name" value="ShK"/>
    <property type="match status" value="2"/>
</dbReference>
<dbReference type="PRINTS" id="PR00480">
    <property type="entry name" value="ASTACIN"/>
</dbReference>
<dbReference type="SMART" id="SM00254">
    <property type="entry name" value="ShKT"/>
    <property type="match status" value="2"/>
</dbReference>
<dbReference type="SMART" id="SM00235">
    <property type="entry name" value="ZnMc"/>
    <property type="match status" value="1"/>
</dbReference>
<dbReference type="SUPFAM" id="SSF55486">
    <property type="entry name" value="Metalloproteases ('zincins'), catalytic domain"/>
    <property type="match status" value="1"/>
</dbReference>
<dbReference type="PROSITE" id="PS51864">
    <property type="entry name" value="ASTACIN"/>
    <property type="match status" value="1"/>
</dbReference>
<dbReference type="PROSITE" id="PS51670">
    <property type="entry name" value="SHKT"/>
    <property type="match status" value="2"/>
</dbReference>
<dbReference type="PROSITE" id="PS00142">
    <property type="entry name" value="ZINC_PROTEASE"/>
    <property type="match status" value="1"/>
</dbReference>
<protein>
    <recommendedName>
        <fullName>Zinc metalloproteinase nas-12</fullName>
        <ecNumber evidence="1">3.4.24.-</ecNumber>
    </recommendedName>
    <alternativeName>
        <fullName>Nematode astacin 12</fullName>
    </alternativeName>
</protein>
<keyword id="KW-1015">Disulfide bond</keyword>
<keyword id="KW-0325">Glycoprotein</keyword>
<keyword id="KW-0378">Hydrolase</keyword>
<keyword id="KW-0479">Metal-binding</keyword>
<keyword id="KW-0482">Metalloprotease</keyword>
<keyword id="KW-0645">Protease</keyword>
<keyword id="KW-1185">Reference proteome</keyword>
<keyword id="KW-0677">Repeat</keyword>
<keyword id="KW-0964">Secreted</keyword>
<keyword id="KW-0732">Signal</keyword>
<keyword id="KW-0862">Zinc</keyword>
<keyword id="KW-0865">Zymogen</keyword>
<evidence type="ECO:0000250" key="1">
    <source>
        <dbReference type="UniProtKB" id="A8Q2D1"/>
    </source>
</evidence>
<evidence type="ECO:0000250" key="2">
    <source>
        <dbReference type="UniProtKB" id="P07584"/>
    </source>
</evidence>
<evidence type="ECO:0000255" key="3"/>
<evidence type="ECO:0000255" key="4">
    <source>
        <dbReference type="PROSITE-ProRule" id="PRU01005"/>
    </source>
</evidence>
<evidence type="ECO:0000255" key="5">
    <source>
        <dbReference type="PROSITE-ProRule" id="PRU01211"/>
    </source>
</evidence>
<evidence type="ECO:0000269" key="6">
    <source>
    </source>
</evidence>
<evidence type="ECO:0000305" key="7"/>
<proteinExistence type="evidence at transcript level"/>